<sequence>MEKFTVLEGVAAPLKLVNVDTDMIIPKQYLKTIKRTGLGTGLFSEMRYKDDGSDNPDFVLNQSAYKNAKILVAGDNFGCGSSREHAPWALLDFGIRCVISTSFADIFYNNCFKNGILPVVVSKEDLDKLFDDADRGANATLTIDLPAQEIRGPDGGVVKFEIDPFRKRCLIEGLDDIGLTLEKAPAIAAYETAKGAEQPWL</sequence>
<reference key="1">
    <citation type="submission" date="2007-07" db="EMBL/GenBank/DDBJ databases">
        <title>Complete sequence of chromosome of Xanthobacter autotrophicus Py2.</title>
        <authorList>
            <consortium name="US DOE Joint Genome Institute"/>
            <person name="Copeland A."/>
            <person name="Lucas S."/>
            <person name="Lapidus A."/>
            <person name="Barry K."/>
            <person name="Glavina del Rio T."/>
            <person name="Hammon N."/>
            <person name="Israni S."/>
            <person name="Dalin E."/>
            <person name="Tice H."/>
            <person name="Pitluck S."/>
            <person name="Sims D."/>
            <person name="Brettin T."/>
            <person name="Bruce D."/>
            <person name="Detter J.C."/>
            <person name="Han C."/>
            <person name="Tapia R."/>
            <person name="Brainard J."/>
            <person name="Schmutz J."/>
            <person name="Larimer F."/>
            <person name="Land M."/>
            <person name="Hauser L."/>
            <person name="Kyrpides N."/>
            <person name="Kim E."/>
            <person name="Ensigns S.A."/>
            <person name="Richardson P."/>
        </authorList>
    </citation>
    <scope>NUCLEOTIDE SEQUENCE [LARGE SCALE GENOMIC DNA]</scope>
    <source>
        <strain>ATCC BAA-1158 / Py2</strain>
    </source>
</reference>
<dbReference type="EC" id="4.2.1.33" evidence="1"/>
<dbReference type="EMBL" id="CP000781">
    <property type="protein sequence ID" value="ABS66434.1"/>
    <property type="molecule type" value="Genomic_DNA"/>
</dbReference>
<dbReference type="SMR" id="A7IEJ1"/>
<dbReference type="STRING" id="78245.Xaut_1185"/>
<dbReference type="KEGG" id="xau:Xaut_1185"/>
<dbReference type="eggNOG" id="COG0066">
    <property type="taxonomic scope" value="Bacteria"/>
</dbReference>
<dbReference type="HOGENOM" id="CLU_081378_0_3_5"/>
<dbReference type="OrthoDB" id="9777465at2"/>
<dbReference type="PhylomeDB" id="A7IEJ1"/>
<dbReference type="UniPathway" id="UPA00048">
    <property type="reaction ID" value="UER00071"/>
</dbReference>
<dbReference type="Proteomes" id="UP000002417">
    <property type="component" value="Chromosome"/>
</dbReference>
<dbReference type="GO" id="GO:0009316">
    <property type="term" value="C:3-isopropylmalate dehydratase complex"/>
    <property type="evidence" value="ECO:0007669"/>
    <property type="project" value="InterPro"/>
</dbReference>
<dbReference type="GO" id="GO:0003861">
    <property type="term" value="F:3-isopropylmalate dehydratase activity"/>
    <property type="evidence" value="ECO:0007669"/>
    <property type="project" value="UniProtKB-UniRule"/>
</dbReference>
<dbReference type="GO" id="GO:0009098">
    <property type="term" value="P:L-leucine biosynthetic process"/>
    <property type="evidence" value="ECO:0007669"/>
    <property type="project" value="UniProtKB-UniRule"/>
</dbReference>
<dbReference type="CDD" id="cd01577">
    <property type="entry name" value="IPMI_Swivel"/>
    <property type="match status" value="1"/>
</dbReference>
<dbReference type="FunFam" id="3.20.19.10:FF:000003">
    <property type="entry name" value="3-isopropylmalate dehydratase small subunit"/>
    <property type="match status" value="1"/>
</dbReference>
<dbReference type="Gene3D" id="3.20.19.10">
    <property type="entry name" value="Aconitase, domain 4"/>
    <property type="match status" value="1"/>
</dbReference>
<dbReference type="HAMAP" id="MF_01031">
    <property type="entry name" value="LeuD_type1"/>
    <property type="match status" value="1"/>
</dbReference>
<dbReference type="InterPro" id="IPR004431">
    <property type="entry name" value="3-IsopropMal_deHydase_ssu"/>
</dbReference>
<dbReference type="InterPro" id="IPR015928">
    <property type="entry name" value="Aconitase/3IPM_dehydase_swvl"/>
</dbReference>
<dbReference type="InterPro" id="IPR000573">
    <property type="entry name" value="AconitaseA/IPMdHydase_ssu_swvl"/>
</dbReference>
<dbReference type="InterPro" id="IPR033940">
    <property type="entry name" value="IPMI_Swivel"/>
</dbReference>
<dbReference type="InterPro" id="IPR050075">
    <property type="entry name" value="LeuD"/>
</dbReference>
<dbReference type="NCBIfam" id="TIGR00171">
    <property type="entry name" value="leuD"/>
    <property type="match status" value="1"/>
</dbReference>
<dbReference type="NCBIfam" id="NF002458">
    <property type="entry name" value="PRK01641.1"/>
    <property type="match status" value="1"/>
</dbReference>
<dbReference type="PANTHER" id="PTHR43345:SF5">
    <property type="entry name" value="3-ISOPROPYLMALATE DEHYDRATASE SMALL SUBUNIT"/>
    <property type="match status" value="1"/>
</dbReference>
<dbReference type="PANTHER" id="PTHR43345">
    <property type="entry name" value="3-ISOPROPYLMALATE DEHYDRATASE SMALL SUBUNIT 2-RELATED-RELATED"/>
    <property type="match status" value="1"/>
</dbReference>
<dbReference type="Pfam" id="PF00694">
    <property type="entry name" value="Aconitase_C"/>
    <property type="match status" value="1"/>
</dbReference>
<dbReference type="SUPFAM" id="SSF52016">
    <property type="entry name" value="LeuD/IlvD-like"/>
    <property type="match status" value="1"/>
</dbReference>
<proteinExistence type="inferred from homology"/>
<organism>
    <name type="scientific">Xanthobacter autotrophicus (strain ATCC BAA-1158 / Py2)</name>
    <dbReference type="NCBI Taxonomy" id="78245"/>
    <lineage>
        <taxon>Bacteria</taxon>
        <taxon>Pseudomonadati</taxon>
        <taxon>Pseudomonadota</taxon>
        <taxon>Alphaproteobacteria</taxon>
        <taxon>Hyphomicrobiales</taxon>
        <taxon>Xanthobacteraceae</taxon>
        <taxon>Xanthobacter</taxon>
    </lineage>
</organism>
<protein>
    <recommendedName>
        <fullName evidence="1">3-isopropylmalate dehydratase small subunit</fullName>
        <ecNumber evidence="1">4.2.1.33</ecNumber>
    </recommendedName>
    <alternativeName>
        <fullName evidence="1">Alpha-IPM isomerase</fullName>
        <shortName evidence="1">IPMI</shortName>
    </alternativeName>
    <alternativeName>
        <fullName evidence="1">Isopropylmalate isomerase</fullName>
    </alternativeName>
</protein>
<feature type="chain" id="PRO_1000135839" description="3-isopropylmalate dehydratase small subunit">
    <location>
        <begin position="1"/>
        <end position="201"/>
    </location>
</feature>
<comment type="function">
    <text evidence="1">Catalyzes the isomerization between 2-isopropylmalate and 3-isopropylmalate, via the formation of 2-isopropylmaleate.</text>
</comment>
<comment type="catalytic activity">
    <reaction evidence="1">
        <text>(2R,3S)-3-isopropylmalate = (2S)-2-isopropylmalate</text>
        <dbReference type="Rhea" id="RHEA:32287"/>
        <dbReference type="ChEBI" id="CHEBI:1178"/>
        <dbReference type="ChEBI" id="CHEBI:35121"/>
        <dbReference type="EC" id="4.2.1.33"/>
    </reaction>
</comment>
<comment type="pathway">
    <text evidence="1">Amino-acid biosynthesis; L-leucine biosynthesis; L-leucine from 3-methyl-2-oxobutanoate: step 2/4.</text>
</comment>
<comment type="subunit">
    <text evidence="1">Heterodimer of LeuC and LeuD.</text>
</comment>
<comment type="similarity">
    <text evidence="1">Belongs to the LeuD family. LeuD type 1 subfamily.</text>
</comment>
<keyword id="KW-0028">Amino-acid biosynthesis</keyword>
<keyword id="KW-0100">Branched-chain amino acid biosynthesis</keyword>
<keyword id="KW-0432">Leucine biosynthesis</keyword>
<keyword id="KW-0456">Lyase</keyword>
<keyword id="KW-1185">Reference proteome</keyword>
<name>LEUD_XANP2</name>
<evidence type="ECO:0000255" key="1">
    <source>
        <dbReference type="HAMAP-Rule" id="MF_01031"/>
    </source>
</evidence>
<accession>A7IEJ1</accession>
<gene>
    <name evidence="1" type="primary">leuD</name>
    <name type="ordered locus">Xaut_1185</name>
</gene>